<dbReference type="EMBL" id="CM009296">
    <property type="protein sequence ID" value="PNT27201.1"/>
    <property type="molecule type" value="Genomic_DNA"/>
</dbReference>
<dbReference type="SMR" id="A0A2K1ZPK4"/>
<dbReference type="FunCoup" id="A0A2K1ZPK4">
    <property type="interactions" value="2742"/>
</dbReference>
<dbReference type="STRING" id="3694.A0A2K1ZPK4"/>
<dbReference type="EnsemblPlants" id="Potri.007G050600.1.v4.1">
    <property type="protein sequence ID" value="Potri.007G050600.1.v4.1"/>
    <property type="gene ID" value="Potri.007G050600.v4.1"/>
</dbReference>
<dbReference type="Gramene" id="Potri.007G050600.1.v4.1">
    <property type="protein sequence ID" value="Potri.007G050600.1.v4.1"/>
    <property type="gene ID" value="Potri.007G050600.v4.1"/>
</dbReference>
<dbReference type="InParanoid" id="A0A2K1ZPK4"/>
<dbReference type="OMA" id="AEIAYDY"/>
<dbReference type="OrthoDB" id="409173at2759"/>
<dbReference type="Proteomes" id="UP000006729">
    <property type="component" value="Chromosome 7"/>
</dbReference>
<dbReference type="ExpressionAtlas" id="A0A2K1ZPK4">
    <property type="expression patterns" value="baseline and differential"/>
</dbReference>
<dbReference type="GO" id="GO:0009705">
    <property type="term" value="C:plant-type vacuole membrane"/>
    <property type="evidence" value="ECO:0000314"/>
    <property type="project" value="UniProtKB"/>
</dbReference>
<dbReference type="GO" id="GO:0005774">
    <property type="term" value="C:vacuolar membrane"/>
    <property type="evidence" value="ECO:0000318"/>
    <property type="project" value="GO_Central"/>
</dbReference>
<dbReference type="GO" id="GO:0015086">
    <property type="term" value="F:cadmium ion transmembrane transporter activity"/>
    <property type="evidence" value="ECO:0000318"/>
    <property type="project" value="GO_Central"/>
</dbReference>
<dbReference type="GO" id="GO:0005384">
    <property type="term" value="F:manganese ion transmembrane transporter activity"/>
    <property type="evidence" value="ECO:0000314"/>
    <property type="project" value="UniProtKB"/>
</dbReference>
<dbReference type="GO" id="GO:0046873">
    <property type="term" value="F:metal ion transmembrane transporter activity"/>
    <property type="evidence" value="ECO:0000314"/>
    <property type="project" value="UniProtKB"/>
</dbReference>
<dbReference type="GO" id="GO:0042742">
    <property type="term" value="P:defense response to bacterium"/>
    <property type="evidence" value="ECO:0000318"/>
    <property type="project" value="GO_Central"/>
</dbReference>
<dbReference type="GO" id="GO:0006879">
    <property type="term" value="P:intracellular iron ion homeostasis"/>
    <property type="evidence" value="ECO:0000314"/>
    <property type="project" value="UniProtKB"/>
</dbReference>
<dbReference type="GO" id="GO:0034755">
    <property type="term" value="P:iron ion transmembrane transport"/>
    <property type="evidence" value="ECO:0000318"/>
    <property type="project" value="GO_Central"/>
</dbReference>
<dbReference type="GO" id="GO:0006826">
    <property type="term" value="P:iron ion transport"/>
    <property type="evidence" value="ECO:0000314"/>
    <property type="project" value="UniProtKB"/>
</dbReference>
<dbReference type="GO" id="GO:0071421">
    <property type="term" value="P:manganese ion transmembrane transport"/>
    <property type="evidence" value="ECO:0000314"/>
    <property type="project" value="UniProtKB"/>
</dbReference>
<dbReference type="GO" id="GO:0006828">
    <property type="term" value="P:manganese ion transport"/>
    <property type="evidence" value="ECO:0000318"/>
    <property type="project" value="GO_Central"/>
</dbReference>
<dbReference type="GO" id="GO:2000379">
    <property type="term" value="P:positive regulation of reactive oxygen species metabolic process"/>
    <property type="evidence" value="ECO:0000318"/>
    <property type="project" value="GO_Central"/>
</dbReference>
<dbReference type="GO" id="GO:1903335">
    <property type="term" value="P:regulation of vacuolar transport"/>
    <property type="evidence" value="ECO:0000314"/>
    <property type="project" value="UniProtKB"/>
</dbReference>
<dbReference type="HAMAP" id="MF_00221">
    <property type="entry name" value="NRAMP"/>
    <property type="match status" value="1"/>
</dbReference>
<dbReference type="InterPro" id="IPR001046">
    <property type="entry name" value="NRAMP_fam"/>
</dbReference>
<dbReference type="NCBIfam" id="TIGR01197">
    <property type="entry name" value="nramp"/>
    <property type="match status" value="1"/>
</dbReference>
<dbReference type="NCBIfam" id="NF037982">
    <property type="entry name" value="Nramp_1"/>
    <property type="match status" value="1"/>
</dbReference>
<dbReference type="PANTHER" id="PTHR11706:SF109">
    <property type="entry name" value="METAL TRANSPORTER NRAMP3"/>
    <property type="match status" value="1"/>
</dbReference>
<dbReference type="PANTHER" id="PTHR11706">
    <property type="entry name" value="SOLUTE CARRIER PROTEIN FAMILY 11 MEMBER"/>
    <property type="match status" value="1"/>
</dbReference>
<dbReference type="Pfam" id="PF01566">
    <property type="entry name" value="Nramp"/>
    <property type="match status" value="1"/>
</dbReference>
<dbReference type="PRINTS" id="PR00447">
    <property type="entry name" value="NATRESASSCMP"/>
</dbReference>
<proteinExistence type="evidence at protein level"/>
<feature type="chain" id="PRO_0000457939" description="Metal transporter Nramp3.2">
    <location>
        <begin position="1"/>
        <end position="505"/>
    </location>
</feature>
<feature type="transmembrane region" description="Helical; Name=1" evidence="1">
    <location>
        <begin position="50"/>
        <end position="70"/>
    </location>
</feature>
<feature type="transmembrane region" description="Helical; Name=2" evidence="1">
    <location>
        <begin position="78"/>
        <end position="98"/>
    </location>
</feature>
<feature type="transmembrane region" description="Helical; Name=3" evidence="1">
    <location>
        <begin position="127"/>
        <end position="147"/>
    </location>
</feature>
<feature type="transmembrane region" description="Helical; Name=4" evidence="1">
    <location>
        <begin position="159"/>
        <end position="179"/>
    </location>
</feature>
<feature type="transmembrane region" description="Helical; Name=5" evidence="1">
    <location>
        <begin position="187"/>
        <end position="207"/>
    </location>
</feature>
<feature type="transmembrane region" description="Helical; Name=6" evidence="1">
    <location>
        <begin position="233"/>
        <end position="253"/>
    </location>
</feature>
<feature type="transmembrane region" description="Helical; Name=7" evidence="1">
    <location>
        <begin position="280"/>
        <end position="300"/>
    </location>
</feature>
<feature type="transmembrane region" description="Helical; Name=8" evidence="1">
    <location>
        <begin position="321"/>
        <end position="341"/>
    </location>
</feature>
<feature type="transmembrane region" description="Helical; Name=9" evidence="1">
    <location>
        <begin position="369"/>
        <end position="389"/>
    </location>
</feature>
<feature type="transmembrane region" description="Helical; Name=10" evidence="1">
    <location>
        <begin position="400"/>
        <end position="420"/>
    </location>
</feature>
<feature type="transmembrane region" description="Helical; Name=11" evidence="1">
    <location>
        <begin position="439"/>
        <end position="459"/>
    </location>
</feature>
<feature type="transmembrane region" description="Helical; Name=12" evidence="1">
    <location>
        <begin position="466"/>
        <end position="486"/>
    </location>
</feature>
<evidence type="ECO:0000255" key="1"/>
<evidence type="ECO:0000269" key="2">
    <source>
    </source>
</evidence>
<evidence type="ECO:0000303" key="3">
    <source>
    </source>
</evidence>
<evidence type="ECO:0000303" key="4">
    <source>
    </source>
</evidence>
<evidence type="ECO:0000305" key="5"/>
<reference key="1">
    <citation type="journal article" date="2006" name="Science">
        <title>The genome of black cottonwood, Populus trichocarpa (Torr. &amp; Gray).</title>
        <authorList>
            <person name="Tuskan G.A."/>
            <person name="Difazio S."/>
            <person name="Jansson S."/>
            <person name="Bohlmann J."/>
            <person name="Grigoriev I."/>
            <person name="Hellsten U."/>
            <person name="Putnam N."/>
            <person name="Ralph S."/>
            <person name="Rombauts S."/>
            <person name="Salamov A."/>
            <person name="Schein J."/>
            <person name="Sterck L."/>
            <person name="Aerts A."/>
            <person name="Bhalerao R.R."/>
            <person name="Bhalerao R.P."/>
            <person name="Blaudez D."/>
            <person name="Boerjan W."/>
            <person name="Brun A."/>
            <person name="Brunner A."/>
            <person name="Busov V."/>
            <person name="Campbell M."/>
            <person name="Carlson J."/>
            <person name="Chalot M."/>
            <person name="Chapman J."/>
            <person name="Chen G.-L."/>
            <person name="Cooper D."/>
            <person name="Coutinho P.M."/>
            <person name="Couturier J."/>
            <person name="Covert S."/>
            <person name="Cronk Q."/>
            <person name="Cunningham R."/>
            <person name="Davis J."/>
            <person name="Degroeve S."/>
            <person name="Dejardin A."/>
            <person name="dePamphilis C.W."/>
            <person name="Detter J."/>
            <person name="Dirks B."/>
            <person name="Dubchak I."/>
            <person name="Duplessis S."/>
            <person name="Ehlting J."/>
            <person name="Ellis B."/>
            <person name="Gendler K."/>
            <person name="Goodstein D."/>
            <person name="Gribskov M."/>
            <person name="Grimwood J."/>
            <person name="Groover A."/>
            <person name="Gunter L."/>
            <person name="Hamberger B."/>
            <person name="Heinze B."/>
            <person name="Helariutta Y."/>
            <person name="Henrissat B."/>
            <person name="Holligan D."/>
            <person name="Holt R."/>
            <person name="Huang W."/>
            <person name="Islam-Faridi N."/>
            <person name="Jones S."/>
            <person name="Jones-Rhoades M."/>
            <person name="Jorgensen R."/>
            <person name="Joshi C."/>
            <person name="Kangasjaervi J."/>
            <person name="Karlsson J."/>
            <person name="Kelleher C."/>
            <person name="Kirkpatrick R."/>
            <person name="Kirst M."/>
            <person name="Kohler A."/>
            <person name="Kalluri U."/>
            <person name="Larimer F."/>
            <person name="Leebens-Mack J."/>
            <person name="Leple J.-C."/>
            <person name="Locascio P."/>
            <person name="Lou Y."/>
            <person name="Lucas S."/>
            <person name="Martin F."/>
            <person name="Montanini B."/>
            <person name="Napoli C."/>
            <person name="Nelson D.R."/>
            <person name="Nelson C."/>
            <person name="Nieminen K."/>
            <person name="Nilsson O."/>
            <person name="Pereda V."/>
            <person name="Peter G."/>
            <person name="Philippe R."/>
            <person name="Pilate G."/>
            <person name="Poliakov A."/>
            <person name="Razumovskaya J."/>
            <person name="Richardson P."/>
            <person name="Rinaldi C."/>
            <person name="Ritland K."/>
            <person name="Rouze P."/>
            <person name="Ryaboy D."/>
            <person name="Schmutz J."/>
            <person name="Schrader J."/>
            <person name="Segerman B."/>
            <person name="Shin H."/>
            <person name="Siddiqui A."/>
            <person name="Sterky F."/>
            <person name="Terry A."/>
            <person name="Tsai C.-J."/>
            <person name="Uberbacher E."/>
            <person name="Unneberg P."/>
            <person name="Vahala J."/>
            <person name="Wall K."/>
            <person name="Wessler S."/>
            <person name="Yang G."/>
            <person name="Yin T."/>
            <person name="Douglas C."/>
            <person name="Marra M."/>
            <person name="Sandberg G."/>
            <person name="Van de Peer Y."/>
            <person name="Rokhsar D.S."/>
        </authorList>
    </citation>
    <scope>NUCLEOTIDE SEQUENCE [LARGE SCALE GENOMIC DNA]</scope>
    <source>
        <strain>cv. Nisqually</strain>
    </source>
</reference>
<reference key="2">
    <citation type="journal article" date="2010" name="Cell. Mol. Life Sci.">
        <title>Genome-wide analysis of plant metal transporters, with an emphasis on poplar.</title>
        <authorList>
            <person name="Migeon A."/>
            <person name="Blaudez D."/>
            <person name="Wilkins O."/>
            <person name="Montanini B."/>
            <person name="Campbell M.M."/>
            <person name="Richaud P."/>
            <person name="Thomine S."/>
            <person name="Chalot M."/>
        </authorList>
    </citation>
    <scope>GENE FAMILY</scope>
    <scope>NOMENCLATURE</scope>
</reference>
<reference key="3">
    <citation type="journal article" date="2022" name="Mol. Biol. Evol.">
        <title>Duplication of NRAMP3 gene in poplars generated two homologous transporters with distinct functions.</title>
        <authorList>
            <person name="Pottier M."/>
            <person name="Le Thi V.A."/>
            <person name="Primard-Brisset C."/>
            <person name="Marion J."/>
            <person name="Bianchi M.W."/>
            <person name="Victor C."/>
            <person name="Dejardin A."/>
            <person name="Pilate G."/>
            <person name="Thomine S."/>
        </authorList>
    </citation>
    <scope>FUNCTION</scope>
    <scope>CATALYTIC ACTIVITY</scope>
    <scope>TISSUE SPECIFICITY</scope>
    <scope>SUBCELLULAR LOCATION</scope>
    <scope>GENE FAMILY</scope>
    <source>
        <strain>cv. Nisqually</strain>
    </source>
</reference>
<keyword id="KW-0406">Ion transport</keyword>
<keyword id="KW-0472">Membrane</keyword>
<keyword id="KW-1185">Reference proteome</keyword>
<keyword id="KW-0812">Transmembrane</keyword>
<keyword id="KW-1133">Transmembrane helix</keyword>
<keyword id="KW-0813">Transport</keyword>
<keyword id="KW-0926">Vacuole</keyword>
<organism>
    <name type="scientific">Populus trichocarpa</name>
    <name type="common">Western balsam poplar</name>
    <name type="synonym">Populus balsamifera subsp. trichocarpa</name>
    <dbReference type="NCBI Taxonomy" id="3694"/>
    <lineage>
        <taxon>Eukaryota</taxon>
        <taxon>Viridiplantae</taxon>
        <taxon>Streptophyta</taxon>
        <taxon>Embryophyta</taxon>
        <taxon>Tracheophyta</taxon>
        <taxon>Spermatophyta</taxon>
        <taxon>Magnoliopsida</taxon>
        <taxon>eudicotyledons</taxon>
        <taxon>Gunneridae</taxon>
        <taxon>Pentapetalae</taxon>
        <taxon>rosids</taxon>
        <taxon>fabids</taxon>
        <taxon>Malpighiales</taxon>
        <taxon>Salicaceae</taxon>
        <taxon>Saliceae</taxon>
        <taxon>Populus</taxon>
    </lineage>
</organism>
<protein>
    <recommendedName>
        <fullName evidence="3 4">Metal transporter Nramp3.2</fullName>
        <shortName evidence="4">PotriNRAMP3.2</shortName>
        <shortName evidence="3">PtNRAMP3.2</shortName>
    </recommendedName>
    <alternativeName>
        <fullName evidence="5">Natural resistance-associated macrophage protein 3.2</fullName>
    </alternativeName>
</protein>
<comment type="function">
    <text evidence="2">Divalent metal transporter (PubMed:35700212). Can transport manganese (Mn) and iron (Fe) (PubMed:35700212). Involved in the release of metals stored in the vacuole (PubMed:35700212).</text>
</comment>
<comment type="catalytic activity">
    <reaction evidence="2">
        <text>Mn(2+)(in) = Mn(2+)(out)</text>
        <dbReference type="Rhea" id="RHEA:28699"/>
        <dbReference type="ChEBI" id="CHEBI:29035"/>
    </reaction>
</comment>
<comment type="catalytic activity">
    <reaction evidence="2">
        <text>Fe(2+)(in) = Fe(2+)(out)</text>
        <dbReference type="Rhea" id="RHEA:28486"/>
        <dbReference type="ChEBI" id="CHEBI:29033"/>
    </reaction>
</comment>
<comment type="subcellular location">
    <subcellularLocation>
        <location evidence="2">Vacuole membrane</location>
        <topology evidence="1">Multi-pass membrane protein</topology>
    </subcellularLocation>
</comment>
<comment type="tissue specificity">
    <text evidence="2">Expressed in roots, stems, buds and leaves.</text>
</comment>
<comment type="similarity">
    <text evidence="5">Belongs to the NRAMP (TC 2.A.55) family.</text>
</comment>
<accession>A0A2K1ZPK4</accession>
<gene>
    <name evidence="3 4" type="primary">NRAMP3.2</name>
    <name evidence="5" type="ordered locus">Potri.007G050600</name>
</gene>
<name>NRP32_POPTR</name>
<sequence>MPVEENYQPLLQEEEERAYDSDEKVLIIGVDSDTESGGSTVLPPFSWKKLWLFTGPGFLMSIAFLDPGNLEGDLQAGAIAGYSLLWLLLWATAMGLLVQLLSARLGVATGRHLAELCREEYPTWASMVLWIMAELALIGADIQEVIGSAIAIKILSNGFVPLWAGVTITACDCFIFLFLENYGVRKLEAVFAVLIGIMAVTFGWMFADAKPSASELFLGILIPKLSSRTIQQAVGVVGCIIMPHNVFLHSALVQSREIDHNKKDRVQEALRYYSIESTTALVISFVINLFVTTVFAKGFYGTELANSIGLVNAGQYLQDKYGGGFFPILYIWGIGLLAAGQSSTITGTYAGQFIMGGFLNLRLKKWLRALITRSCAIIPTMIVALVFDTSEDSLDVLNEWLNVLQSIQIPFALIPLLCLVSKEQIMGTFKIGPILKMVAWLVAALVMVINGYLLLDFFFNEVTGVAFTTVVCGFTGAYVAFIIYLISRGFTCFSRCCPSKQIEVE</sequence>